<dbReference type="EMBL" id="U02303">
    <property type="protein sequence ID" value="AAC62158.1"/>
    <property type="molecule type" value="Genomic_DNA"/>
</dbReference>
<dbReference type="RefSeq" id="NP_047359.1">
    <property type="nucleotide sequence ID" value="NC_001954.1"/>
</dbReference>
<dbReference type="SMR" id="O80300"/>
<dbReference type="GeneID" id="1261858"/>
<dbReference type="KEGG" id="vg:1261858"/>
<dbReference type="OrthoDB" id="9067at10239"/>
<dbReference type="Proteomes" id="UP000001833">
    <property type="component" value="Genome"/>
</dbReference>
<dbReference type="GO" id="GO:0033644">
    <property type="term" value="C:host cell membrane"/>
    <property type="evidence" value="ECO:0007669"/>
    <property type="project" value="UniProtKB-SubCell"/>
</dbReference>
<dbReference type="GO" id="GO:0016020">
    <property type="term" value="C:membrane"/>
    <property type="evidence" value="ECO:0007669"/>
    <property type="project" value="UniProtKB-KW"/>
</dbReference>
<dbReference type="GO" id="GO:0009306">
    <property type="term" value="P:protein secretion"/>
    <property type="evidence" value="ECO:0007669"/>
    <property type="project" value="InterPro"/>
</dbReference>
<dbReference type="GO" id="GO:0099045">
    <property type="term" value="P:viral extrusion"/>
    <property type="evidence" value="ECO:0007669"/>
    <property type="project" value="UniProtKB-KW"/>
</dbReference>
<dbReference type="Gene3D" id="3.30.1370.120">
    <property type="match status" value="1"/>
</dbReference>
<dbReference type="InterPro" id="IPR050810">
    <property type="entry name" value="Bact_Secretion_Sys_Channel"/>
</dbReference>
<dbReference type="InterPro" id="IPR049371">
    <property type="entry name" value="GspD-like_N0"/>
</dbReference>
<dbReference type="InterPro" id="IPR001775">
    <property type="entry name" value="GspD/PilQ"/>
</dbReference>
<dbReference type="InterPro" id="IPR005644">
    <property type="entry name" value="NolW-like"/>
</dbReference>
<dbReference type="InterPro" id="IPR038591">
    <property type="entry name" value="NolW-like_sf"/>
</dbReference>
<dbReference type="InterPro" id="IPR004846">
    <property type="entry name" value="T2SS/T3SS_dom"/>
</dbReference>
<dbReference type="InterPro" id="IPR004845">
    <property type="entry name" value="T2SS_GspD_CS"/>
</dbReference>
<dbReference type="PANTHER" id="PTHR30332">
    <property type="entry name" value="PROBABLE GENERAL SECRETION PATHWAY PROTEIN D"/>
    <property type="match status" value="1"/>
</dbReference>
<dbReference type="PANTHER" id="PTHR30332:SF24">
    <property type="entry name" value="SECRETIN GSPD-RELATED"/>
    <property type="match status" value="1"/>
</dbReference>
<dbReference type="Pfam" id="PF00263">
    <property type="entry name" value="Secretin"/>
    <property type="match status" value="1"/>
</dbReference>
<dbReference type="Pfam" id="PF03958">
    <property type="entry name" value="Secretin_N"/>
    <property type="match status" value="1"/>
</dbReference>
<dbReference type="Pfam" id="PF21305">
    <property type="entry name" value="type_II_gspD_N0"/>
    <property type="match status" value="1"/>
</dbReference>
<dbReference type="PRINTS" id="PR00811">
    <property type="entry name" value="BCTERIALGSPD"/>
</dbReference>
<dbReference type="PRINTS" id="PR01032">
    <property type="entry name" value="PHAGEIV"/>
</dbReference>
<dbReference type="PROSITE" id="PS00875">
    <property type="entry name" value="T2SP_D"/>
    <property type="match status" value="1"/>
</dbReference>
<accession>O80300</accession>
<reference key="1">
    <citation type="submission" date="1993-10" db="EMBL/GenBank/DDBJ databases">
        <title>DNA sequence of the filamentous coliphage If1.</title>
        <authorList>
            <person name="Hill D.F."/>
            <person name="Hughes G."/>
            <person name="McNaughton J.C."/>
            <person name="Stockwell P.A."/>
            <person name="Petersen G.B."/>
        </authorList>
    </citation>
    <scope>NUCLEOTIDE SEQUENCE [GENOMIC DNA]</scope>
</reference>
<sequence length="429" mass="45863">MKKLLASLLCVLSFQSFAIPVELNNAPVREFVSWYSKTTGKPVIISPDVKGEITVYSADVTKDELPQFFTSVLRANGFDLSPGNPAVVQKFNRNTYEYSDSFSEPVPASSYDGDVPPPTGDFFTKPEIRANLITQTYPVNNVRAKDLAPVIDIFLKGENIAGTKVYPLMGRIFLLVTASASQHKELAAFFPSVDVPRTQVLVESVIFETTASDGFDFSFAAGDPSGSPVAGGINTDRLTSVLSSTGGSFGIFNGNILGLSLKALETSSKSTLLSMPRILTMSGQPGTFTAGQNVPFVTGRVTGEAANVNNPFQTIERHDVGISLKVVPVVTPGGLLIMDVSTNADSISDSQTASDIITNTRSISTTVQLKSGQTVLLGGMVDNRESDSDSSVPWVSKIPLIGALFTSKSSNANKRTLYILIRARVVNLL</sequence>
<organismHost>
    <name type="scientific">Escherichia coli</name>
    <dbReference type="NCBI Taxonomy" id="562"/>
</organismHost>
<gene>
    <name type="primary">IV</name>
</gene>
<keyword id="KW-1043">Host membrane</keyword>
<keyword id="KW-0472">Membrane</keyword>
<keyword id="KW-1185">Reference proteome</keyword>
<keyword id="KW-0732">Signal</keyword>
<keyword id="KW-0812">Transmembrane</keyword>
<keyword id="KW-1133">Transmembrane helix</keyword>
<keyword id="KW-1249">Viral extrusion</keyword>
<keyword id="KW-1188">Viral release from host cell</keyword>
<feature type="signal peptide" evidence="2">
    <location>
        <begin position="1"/>
        <end position="18"/>
    </location>
</feature>
<feature type="chain" id="PRO_0000209451" description="Virion export protein">
    <location>
        <begin position="19"/>
        <end position="429"/>
    </location>
</feature>
<feature type="transmembrane region" description="Helical" evidence="2">
    <location>
        <begin position="320"/>
        <end position="340"/>
    </location>
</feature>
<evidence type="ECO:0000250" key="1"/>
<evidence type="ECO:0000255" key="2"/>
<evidence type="ECO:0000305" key="3"/>
<comment type="function">
    <text evidence="1">Acts in the assembly and extrusion of the bacteriophage by forming a channel across the host outer membrane. This channel is just large enough to allow a newly synthesized phage particle to pass through. Extrusion is a process of concomitant assembly and secretion and takes place at specific assembly sites where host inner and outer membranes are in close contacts (By similarity).</text>
</comment>
<comment type="subunit">
    <text evidence="1">Homomultimer. The channel is composed of 14 G4P subunits that confer a barrel-like structure. Interacts with G1P; this interaction results in a complex that spans the inner an outer host membranes (By similarity).</text>
</comment>
<comment type="subcellular location">
    <subcellularLocation>
        <location evidence="3">Host membrane</location>
        <topology evidence="3">Single-pass type I membrane protein</topology>
    </subcellularLocation>
</comment>
<comment type="similarity">
    <text evidence="3">Belongs to the inovirus G4P protein family.</text>
</comment>
<proteinExistence type="inferred from homology"/>
<protein>
    <recommendedName>
        <fullName>Virion export protein</fullName>
    </recommendedName>
    <alternativeName>
        <fullName>Gene 4 protein</fullName>
        <shortName>G4P</shortName>
    </alternativeName>
</protein>
<organism>
    <name type="scientific">Escherichia phage If1</name>
    <name type="common">Bacteriophage If1</name>
    <dbReference type="NCBI Taxonomy" id="10868"/>
    <lineage>
        <taxon>Viruses</taxon>
        <taxon>Monodnaviria</taxon>
        <taxon>Loebvirae</taxon>
        <taxon>Hofneiviricota</taxon>
        <taxon>Faserviricetes</taxon>
        <taxon>Tubulavirales</taxon>
        <taxon>Inoviridae</taxon>
        <taxon>Infulavirus</taxon>
        <taxon>Infulavirus If1</taxon>
    </lineage>
</organism>
<name>G4P_BPIF1</name>